<name>YPI6_CLOPF</name>
<evidence type="ECO:0000305" key="1"/>
<sequence>MLRGVDEVAKELKVSKTAIYNKLKLKEFRRKVVKKQGKSMIDEELFNLIKDSLKVKNEVEYKDYIEESKDEVKSEIAMDREGSLNLNKSLIDTLIAQLEEKDKQIAELHKLIENNQVLLKKEQETKINILEFEDHFKEVDNKLSSIKEKMNQRKEKKSFFKNFFKK</sequence>
<reference key="1">
    <citation type="journal article" date="1988" name="Plasmid">
        <title>Complete nucleotide sequence and genetic organization of the bacteriocinogenic plasmid, pIP404, from Clostridium perfringens.</title>
        <authorList>
            <person name="Garnier T."/>
            <person name="Cole S.T."/>
        </authorList>
    </citation>
    <scope>NUCLEOTIDE SEQUENCE [GENOMIC DNA]</scope>
    <source>
        <strain>CPN50</strain>
    </source>
</reference>
<proteinExistence type="predicted"/>
<protein>
    <recommendedName>
        <fullName>Uncharacterized protein ORF6</fullName>
    </recommendedName>
</protein>
<organism>
    <name type="scientific">Clostridium perfringens</name>
    <dbReference type="NCBI Taxonomy" id="1502"/>
    <lineage>
        <taxon>Bacteria</taxon>
        <taxon>Bacillati</taxon>
        <taxon>Bacillota</taxon>
        <taxon>Clostridia</taxon>
        <taxon>Eubacteriales</taxon>
        <taxon>Clostridiaceae</taxon>
        <taxon>Clostridium</taxon>
    </lineage>
</organism>
<keyword id="KW-0614">Plasmid</keyword>
<geneLocation type="plasmid">
    <name>pIP404</name>
</geneLocation>
<feature type="chain" id="PRO_0000208256" description="Uncharacterized protein ORF6">
    <location>
        <begin position="1"/>
        <end position="166"/>
    </location>
</feature>
<dbReference type="EMBL" id="M32882">
    <property type="protein sequence ID" value="AAA98252.1"/>
    <property type="molecule type" value="Genomic_DNA"/>
</dbReference>
<dbReference type="PIR" id="JT0358">
    <property type="entry name" value="JT0358"/>
</dbReference>
<dbReference type="RefSeq" id="NP_040454.1">
    <property type="nucleotide sequence ID" value="NC_001388.1"/>
</dbReference>
<dbReference type="RefSeq" id="WP_010889926.1">
    <property type="nucleotide sequence ID" value="NC_001388.1"/>
</dbReference>
<dbReference type="SMR" id="P18017"/>
<comment type="similarity">
    <text evidence="1">To C.perfringens pCP13 PCP12.</text>
</comment>
<accession>P18017</accession>